<accession>P77247</accession>
<accession>P78167</accession>
<organism>
    <name type="scientific">Escherichia coli (strain K12)</name>
    <dbReference type="NCBI Taxonomy" id="83333"/>
    <lineage>
        <taxon>Bacteria</taxon>
        <taxon>Pseudomonadati</taxon>
        <taxon>Pseudomonadota</taxon>
        <taxon>Gammaproteobacteria</taxon>
        <taxon>Enterobacterales</taxon>
        <taxon>Enterobacteriaceae</taxon>
        <taxon>Escherichia</taxon>
    </lineage>
</organism>
<reference key="1">
    <citation type="journal article" date="1996" name="DNA Res.">
        <title>A 570-kb DNA sequence of the Escherichia coli K-12 genome corresponding to the 28.0-40.1 min region on the linkage map.</title>
        <authorList>
            <person name="Aiba H."/>
            <person name="Baba T."/>
            <person name="Fujita K."/>
            <person name="Hayashi K."/>
            <person name="Inada T."/>
            <person name="Isono K."/>
            <person name="Itoh T."/>
            <person name="Kasai H."/>
            <person name="Kashimoto K."/>
            <person name="Kimura S."/>
            <person name="Kitakawa M."/>
            <person name="Kitagawa M."/>
            <person name="Makino K."/>
            <person name="Miki T."/>
            <person name="Mizobuchi K."/>
            <person name="Mori H."/>
            <person name="Mori T."/>
            <person name="Motomura K."/>
            <person name="Nakade S."/>
            <person name="Nakamura Y."/>
            <person name="Nashimoto H."/>
            <person name="Nishio Y."/>
            <person name="Oshima T."/>
            <person name="Saito N."/>
            <person name="Sampei G."/>
            <person name="Seki Y."/>
            <person name="Sivasundaram S."/>
            <person name="Tagami H."/>
            <person name="Takeda J."/>
            <person name="Takemoto K."/>
            <person name="Takeuchi Y."/>
            <person name="Wada C."/>
            <person name="Yamamoto Y."/>
            <person name="Horiuchi T."/>
        </authorList>
    </citation>
    <scope>NUCLEOTIDE SEQUENCE [LARGE SCALE GENOMIC DNA]</scope>
    <source>
        <strain>K12 / W3110 / ATCC 27325 / DSM 5911</strain>
    </source>
</reference>
<reference key="2">
    <citation type="journal article" date="1997" name="Science">
        <title>The complete genome sequence of Escherichia coli K-12.</title>
        <authorList>
            <person name="Blattner F.R."/>
            <person name="Plunkett G. III"/>
            <person name="Bloch C.A."/>
            <person name="Perna N.T."/>
            <person name="Burland V."/>
            <person name="Riley M."/>
            <person name="Collado-Vides J."/>
            <person name="Glasner J.D."/>
            <person name="Rode C.K."/>
            <person name="Mayhew G.F."/>
            <person name="Gregor J."/>
            <person name="Davis N.W."/>
            <person name="Kirkpatrick H.A."/>
            <person name="Goeden M.A."/>
            <person name="Rose D.J."/>
            <person name="Mau B."/>
            <person name="Shao Y."/>
        </authorList>
    </citation>
    <scope>NUCLEOTIDE SEQUENCE [LARGE SCALE GENOMIC DNA]</scope>
    <source>
        <strain>K12 / MG1655 / ATCC 47076</strain>
    </source>
</reference>
<reference key="3">
    <citation type="journal article" date="2006" name="Mol. Syst. Biol.">
        <title>Highly accurate genome sequences of Escherichia coli K-12 strains MG1655 and W3110.</title>
        <authorList>
            <person name="Hayashi K."/>
            <person name="Morooka N."/>
            <person name="Yamamoto Y."/>
            <person name="Fujita K."/>
            <person name="Isono K."/>
            <person name="Choi S."/>
            <person name="Ohtsubo E."/>
            <person name="Baba T."/>
            <person name="Wanner B.L."/>
            <person name="Mori H."/>
            <person name="Horiuchi T."/>
        </authorList>
    </citation>
    <scope>NUCLEOTIDE SEQUENCE [LARGE SCALE GENOMIC DNA]</scope>
    <source>
        <strain>K12 / W3110 / ATCC 27325 / DSM 5911</strain>
    </source>
</reference>
<reference key="4">
    <citation type="journal article" date="2005" name="FEMS Microbiol. Rev.">
        <title>Enzyme genomics: application of general enzymatic screens to discover new enzymes.</title>
        <authorList>
            <person name="Kuznetsova E."/>
            <person name="Proudfoot M."/>
            <person name="Sanders S.A."/>
            <person name="Reinking J."/>
            <person name="Savchenko A."/>
            <person name="Arrowsmith C.H."/>
            <person name="Edwards A.M."/>
            <person name="Yakunin A.F."/>
        </authorList>
    </citation>
    <scope>FUNCTION</scope>
</reference>
<reference key="5">
    <citation type="journal article" date="2006" name="J. Biol. Chem.">
        <title>Genome-wide analysis of substrate specificities of the Escherichia coli haloacid dehalogenase-like phosphatase family.</title>
        <authorList>
            <person name="Kuznetsova E."/>
            <person name="Proudfoot M."/>
            <person name="Gonzalez C.F."/>
            <person name="Brown G."/>
            <person name="Omelchenko M.V."/>
            <person name="Borozan I."/>
            <person name="Carmel L."/>
            <person name="Wolf Y.I."/>
            <person name="Mori H."/>
            <person name="Savchenko A.V."/>
            <person name="Arrowsmith C.H."/>
            <person name="Koonin E.V."/>
            <person name="Edwards A.M."/>
            <person name="Yakunin A.F."/>
        </authorList>
    </citation>
    <scope>FUNCTION AS A SUGAR-PHOSPHATASE</scope>
    <scope>CATALYTIC ACTIVITY</scope>
    <scope>MUTAGENESIS OF ASP-13</scope>
    <scope>BIOPHYSICOCHEMICAL PROPERTIES</scope>
    <scope>SUBSTRATE SPECIFICITY</scope>
    <scope>DISRUPTION PHENOTYPE</scope>
    <scope>COFACTOR</scope>
    <source>
        <strain>K12 / W3110 / ATCC 27325 / DSM 5911</strain>
    </source>
</reference>
<reference key="6">
    <citation type="journal article" date="2017" name="Nat. Methods">
        <title>Nontargeted in vitro metabolomics for high-throughput identification of novel enzymes in Escherichia coli.</title>
        <authorList>
            <person name="Sevin D.C."/>
            <person name="Fuhrer T."/>
            <person name="Zamboni N."/>
            <person name="Sauer U."/>
        </authorList>
    </citation>
    <scope>FUNCTION</scope>
    <scope>CATALYTIC ACTIVITY</scope>
    <source>
        <strain>K12</strain>
    </source>
</reference>
<reference key="7">
    <citation type="submission" date="2004-08" db="PDB data bank">
        <title>Crystal structure of putative phosphatase YniC from Escherichia coli K12.</title>
        <authorList>
            <person name="Kim Y."/>
            <person name="Joachimiak A."/>
            <person name="Evdokimova E."/>
            <person name="Savchenko A."/>
            <person name="Edwards A.M."/>
        </authorList>
    </citation>
    <scope>X-RAY CRYSTALLOGRAPHY (1.76 ANGSTROMS) IN COMPLEX WITH A SUBSTRATE ANALOG AND CALCIUM IONS</scope>
</reference>
<sequence length="222" mass="24330">MSTPRQILAAIFDMDGLLIDSEPLWDRAELDVMASLGVDISRRNELPDTLGLRIDMVVDLWYARQPWNGPSRQEVVERVIARAISLVEETRPLLPGVREAVALCKEQGLLVGLASASPLHMLEKVLTMFDLRDSFDALASAEKLPYSKPHPQVYLDCAAKLGVDPLTCVALEDSVNGMIASKAARMRSIVVPAPEAQNDPRFVLADVKLSSLTELTAKDLLG</sequence>
<name>HXPB_ECOLI</name>
<comment type="function">
    <text evidence="2 3 4">Sugar-phosphate phosphohydrolase that catalyzes the dephosphorylation of D-mannitol 1-phosphate and D-sorbitol 6-phosphate (PubMed:27941785). Also catalyzes the dephosphorylation of 2-deoxyglucose 6-phosphate (2dGlu6P); this is a biologically important activity in vivo since it contributes to the elimination of this toxic compound and plays an important role in the resistance of E.coli to 2-deoxyglucose (PubMed:16990279). To a lesser extent, is also able to dephosphorylate mannose 6-phosphate (Man6P), erythrose-4-phosphate, 2-deoxyribose-5-phosphate (2dRib5P), ribose-5-phosphate (Rib5P) and glucose-6-phosphate (Glu6P) in vitro (PubMed:16990279).</text>
</comment>
<comment type="catalytic activity">
    <reaction evidence="3">
        <text>sugar phosphate + H2O = sugar + phosphate.</text>
        <dbReference type="EC" id="3.1.3.23"/>
    </reaction>
</comment>
<comment type="catalytic activity">
    <reaction evidence="3">
        <text>2-deoxy-D-glucose 6-phosphate + H2O = 2-deoxy-D-glucose + phosphate</text>
        <dbReference type="Rhea" id="RHEA:22236"/>
        <dbReference type="ChEBI" id="CHEBI:15377"/>
        <dbReference type="ChEBI" id="CHEBI:43474"/>
        <dbReference type="ChEBI" id="CHEBI:84755"/>
        <dbReference type="ChEBI" id="CHEBI:84760"/>
        <dbReference type="EC" id="3.1.3.68"/>
    </reaction>
</comment>
<comment type="catalytic activity">
    <reaction evidence="4">
        <text>D-mannitol 1-phosphate + H2O = D-mannitol + phosphate</text>
        <dbReference type="Rhea" id="RHEA:19537"/>
        <dbReference type="ChEBI" id="CHEBI:15377"/>
        <dbReference type="ChEBI" id="CHEBI:16899"/>
        <dbReference type="ChEBI" id="CHEBI:43474"/>
        <dbReference type="ChEBI" id="CHEBI:61381"/>
        <dbReference type="EC" id="3.1.3.22"/>
    </reaction>
</comment>
<comment type="catalytic activity">
    <reaction evidence="4">
        <text>D-sorbitol 6-phosphate + H2O = D-sorbitol + phosphate</text>
        <dbReference type="Rhea" id="RHEA:24580"/>
        <dbReference type="ChEBI" id="CHEBI:15377"/>
        <dbReference type="ChEBI" id="CHEBI:17924"/>
        <dbReference type="ChEBI" id="CHEBI:43474"/>
        <dbReference type="ChEBI" id="CHEBI:60084"/>
        <dbReference type="EC" id="3.1.3.50"/>
    </reaction>
</comment>
<comment type="cofactor">
    <cofactor evidence="3">
        <name>Mg(2+)</name>
        <dbReference type="ChEBI" id="CHEBI:18420"/>
    </cofactor>
    <cofactor evidence="3">
        <name>Mn(2+)</name>
        <dbReference type="ChEBI" id="CHEBI:29035"/>
    </cofactor>
    <cofactor evidence="3">
        <name>Co(2+)</name>
        <dbReference type="ChEBI" id="CHEBI:48828"/>
    </cofactor>
    <cofactor evidence="3">
        <name>Zn(2+)</name>
        <dbReference type="ChEBI" id="CHEBI:29105"/>
    </cofactor>
    <text evidence="3">Requires the presence of a divalent metal cation for activity. Can use zinc, manganese, cobalt or magnesium.</text>
</comment>
<comment type="biophysicochemical properties">
    <kinetics>
        <KM evidence="3">0.61 mM for 2-deoxyglucose-6-P (with manganese ions as cofactor and at pH 9)</KM>
        <KM evidence="3">2.5 mM for 2-deoxyribose-5-P (with zinc ions as cofactor and at pH 9)</KM>
        <KM evidence="3">2.6 mM for ribose-5-P (with zinc ions as cofactor and at pH 9)</KM>
        <KM evidence="3">3.6 mM for glucose-6-P (with zinc ions as cofactor and at pH 9)</KM>
        <KM evidence="3">4.7 mM for mannose-6-P (with zinc ions as cofactor and at pH 9)</KM>
        <text evidence="3">kcat is 33 sec(-1) with 2-deoxyglucose-6-P as substrate. kcat is 11 sec(-1) with mannose-6-P as substrate. kcat is 9.4 sec(-1) with 2-deoxyribose-5-P as substrate. kcat is 2.8 sec(-1) with ribose-5-P as substrate. kcat is 25 sec(-1) with glucose-6-P as substrate.</text>
    </kinetics>
    <phDependence>
        <text evidence="3">Optimum pH is between 6 and 7.5.</text>
    </phDependence>
</comment>
<comment type="disruption phenotype">
    <text evidence="3">Cells lacking this gene are much more sensitive to the presence of 2-deoxyglucose in the growth medium than wild-type.</text>
</comment>
<comment type="similarity">
    <text evidence="7">Belongs to the HAD-like hydrolase superfamily. CbbY/CbbZ/Gph/YieH family.</text>
</comment>
<evidence type="ECO:0000250" key="1">
    <source>
        <dbReference type="UniProtKB" id="Q8CHP8"/>
    </source>
</evidence>
<evidence type="ECO:0000269" key="2">
    <source>
    </source>
</evidence>
<evidence type="ECO:0000269" key="3">
    <source>
    </source>
</evidence>
<evidence type="ECO:0000269" key="4">
    <source>
    </source>
</evidence>
<evidence type="ECO:0000269" key="5">
    <source ref="7"/>
</evidence>
<evidence type="ECO:0000303" key="6">
    <source>
    </source>
</evidence>
<evidence type="ECO:0000305" key="7"/>
<evidence type="ECO:0000305" key="8">
    <source>
    </source>
</evidence>
<evidence type="ECO:0000305" key="9">
    <source>
    </source>
</evidence>
<evidence type="ECO:0000305" key="10">
    <source ref="7"/>
</evidence>
<evidence type="ECO:0000312" key="11">
    <source>
        <dbReference type="EMBL" id="AAC74797.1"/>
    </source>
</evidence>
<evidence type="ECO:0007829" key="12">
    <source>
        <dbReference type="PDB" id="1TE2"/>
    </source>
</evidence>
<feature type="chain" id="PRO_0000108061" description="Hexitol phosphatase B">
    <location>
        <begin position="1"/>
        <end position="222"/>
    </location>
</feature>
<feature type="active site" description="Nucleophile" evidence="1">
    <location>
        <position position="13"/>
    </location>
</feature>
<feature type="active site" description="Proton donor" evidence="1">
    <location>
        <position position="15"/>
    </location>
</feature>
<feature type="binding site" evidence="10">
    <location>
        <begin position="13"/>
        <end position="15"/>
    </location>
    <ligand>
        <name>substrate</name>
    </ligand>
</feature>
<feature type="binding site" evidence="5">
    <location>
        <position position="13"/>
    </location>
    <ligand>
        <name>a divalent metal cation</name>
        <dbReference type="ChEBI" id="CHEBI:60240"/>
    </ligand>
</feature>
<feature type="binding site" evidence="5">
    <location>
        <position position="15"/>
    </location>
    <ligand>
        <name>a divalent metal cation</name>
        <dbReference type="ChEBI" id="CHEBI:60240"/>
    </ligand>
</feature>
<feature type="binding site" evidence="10">
    <location>
        <begin position="115"/>
        <end position="116"/>
    </location>
    <ligand>
        <name>substrate</name>
    </ligand>
</feature>
<feature type="binding site" evidence="10">
    <location>
        <position position="148"/>
    </location>
    <ligand>
        <name>substrate</name>
    </ligand>
</feature>
<feature type="binding site" evidence="5">
    <location>
        <position position="173"/>
    </location>
    <ligand>
        <name>a divalent metal cation</name>
        <dbReference type="ChEBI" id="CHEBI:60240"/>
    </ligand>
</feature>
<feature type="mutagenesis site" description="Loss of phosphatase activity." evidence="3">
    <original>D</original>
    <variation>A</variation>
    <location>
        <position position="13"/>
    </location>
</feature>
<feature type="strand" evidence="12">
    <location>
        <begin position="9"/>
        <end position="12"/>
    </location>
</feature>
<feature type="turn" evidence="12">
    <location>
        <begin position="15"/>
        <end position="17"/>
    </location>
</feature>
<feature type="helix" evidence="12">
    <location>
        <begin position="22"/>
        <end position="35"/>
    </location>
</feature>
<feature type="helix" evidence="12">
    <location>
        <begin position="40"/>
        <end position="45"/>
    </location>
</feature>
<feature type="helix" evidence="12">
    <location>
        <begin position="54"/>
        <end position="64"/>
    </location>
</feature>
<feature type="strand" evidence="12">
    <location>
        <begin position="68"/>
        <end position="70"/>
    </location>
</feature>
<feature type="helix" evidence="12">
    <location>
        <begin position="72"/>
        <end position="90"/>
    </location>
</feature>
<feature type="helix" evidence="12">
    <location>
        <begin position="97"/>
        <end position="106"/>
    </location>
</feature>
<feature type="strand" evidence="12">
    <location>
        <begin position="110"/>
        <end position="117"/>
    </location>
</feature>
<feature type="helix" evidence="12">
    <location>
        <begin position="119"/>
        <end position="128"/>
    </location>
</feature>
<feature type="helix" evidence="12">
    <location>
        <begin position="132"/>
        <end position="134"/>
    </location>
</feature>
<feature type="strand" evidence="12">
    <location>
        <begin position="136"/>
        <end position="140"/>
    </location>
</feature>
<feature type="helix" evidence="12">
    <location>
        <begin position="152"/>
        <end position="161"/>
    </location>
</feature>
<feature type="helix" evidence="12">
    <location>
        <begin position="165"/>
        <end position="167"/>
    </location>
</feature>
<feature type="strand" evidence="12">
    <location>
        <begin position="168"/>
        <end position="174"/>
    </location>
</feature>
<feature type="helix" evidence="12">
    <location>
        <begin position="175"/>
        <end position="183"/>
    </location>
</feature>
<feature type="strand" evidence="12">
    <location>
        <begin position="187"/>
        <end position="190"/>
    </location>
</feature>
<feature type="turn" evidence="12">
    <location>
        <begin position="194"/>
        <end position="198"/>
    </location>
</feature>
<feature type="helix" evidence="12">
    <location>
        <begin position="200"/>
        <end position="204"/>
    </location>
</feature>
<feature type="strand" evidence="12">
    <location>
        <begin position="205"/>
        <end position="208"/>
    </location>
</feature>
<feature type="helix" evidence="12">
    <location>
        <begin position="212"/>
        <end position="214"/>
    </location>
</feature>
<feature type="helix" evidence="12">
    <location>
        <begin position="217"/>
        <end position="221"/>
    </location>
</feature>
<gene>
    <name evidence="6" type="primary">hxpB</name>
    <name evidence="11" type="synonym">yniC</name>
    <name type="ordered locus">b1727</name>
    <name type="ordered locus">JW1716</name>
</gene>
<dbReference type="EC" id="3.1.3.68" evidence="3"/>
<dbReference type="EC" id="3.1.3.22" evidence="4"/>
<dbReference type="EC" id="3.1.3.50" evidence="4"/>
<dbReference type="EC" id="3.1.3.23" evidence="3"/>
<dbReference type="EMBL" id="U00096">
    <property type="protein sequence ID" value="AAC74797.1"/>
    <property type="molecule type" value="Genomic_DNA"/>
</dbReference>
<dbReference type="EMBL" id="AP009048">
    <property type="protein sequence ID" value="BAA15508.1"/>
    <property type="molecule type" value="Genomic_DNA"/>
</dbReference>
<dbReference type="PIR" id="G64931">
    <property type="entry name" value="G64931"/>
</dbReference>
<dbReference type="RefSeq" id="NP_416241.1">
    <property type="nucleotide sequence ID" value="NC_000913.3"/>
</dbReference>
<dbReference type="RefSeq" id="WP_000106833.1">
    <property type="nucleotide sequence ID" value="NZ_SSZK01000001.1"/>
</dbReference>
<dbReference type="PDB" id="1TE2">
    <property type="method" value="X-ray"/>
    <property type="resolution" value="1.76 A"/>
    <property type="chains" value="A/B=1-222"/>
</dbReference>
<dbReference type="PDBsum" id="1TE2"/>
<dbReference type="SMR" id="P77247"/>
<dbReference type="BioGRID" id="4263414">
    <property type="interactions" value="13"/>
</dbReference>
<dbReference type="DIP" id="DIP-12777N"/>
<dbReference type="FunCoup" id="P77247">
    <property type="interactions" value="396"/>
</dbReference>
<dbReference type="IntAct" id="P77247">
    <property type="interactions" value="8"/>
</dbReference>
<dbReference type="STRING" id="511145.b1727"/>
<dbReference type="jPOST" id="P77247"/>
<dbReference type="PaxDb" id="511145-b1727"/>
<dbReference type="DNASU" id="945632"/>
<dbReference type="EnsemblBacteria" id="AAC74797">
    <property type="protein sequence ID" value="AAC74797"/>
    <property type="gene ID" value="b1727"/>
</dbReference>
<dbReference type="GeneID" id="945632"/>
<dbReference type="KEGG" id="ecj:JW1716"/>
<dbReference type="KEGG" id="eco:b1727"/>
<dbReference type="KEGG" id="ecoc:C3026_09875"/>
<dbReference type="PATRIC" id="fig|1411691.4.peg.529"/>
<dbReference type="EchoBASE" id="EB3744"/>
<dbReference type="eggNOG" id="COG0637">
    <property type="taxonomic scope" value="Bacteria"/>
</dbReference>
<dbReference type="HOGENOM" id="CLU_045011_13_1_6"/>
<dbReference type="InParanoid" id="P77247"/>
<dbReference type="OMA" id="MGVWDQV"/>
<dbReference type="OrthoDB" id="9800058at2"/>
<dbReference type="PhylomeDB" id="P77247"/>
<dbReference type="BioCyc" id="EcoCyc:G6932-MONOMER"/>
<dbReference type="BioCyc" id="MetaCyc:G6932-MONOMER"/>
<dbReference type="EvolutionaryTrace" id="P77247"/>
<dbReference type="PRO" id="PR:P77247"/>
<dbReference type="Proteomes" id="UP000000625">
    <property type="component" value="Chromosome"/>
</dbReference>
<dbReference type="GO" id="GO:0005829">
    <property type="term" value="C:cytosol"/>
    <property type="evidence" value="ECO:0000314"/>
    <property type="project" value="EcoCyc"/>
</dbReference>
<dbReference type="GO" id="GO:0003850">
    <property type="term" value="F:2-deoxyglucose-6-phosphatase activity"/>
    <property type="evidence" value="ECO:0000314"/>
    <property type="project" value="EcoliWiki"/>
</dbReference>
<dbReference type="GO" id="GO:0004346">
    <property type="term" value="F:glucose-6-phosphatase activity"/>
    <property type="evidence" value="ECO:0000314"/>
    <property type="project" value="EcoliWiki"/>
</dbReference>
<dbReference type="GO" id="GO:0000287">
    <property type="term" value="F:magnesium ion binding"/>
    <property type="evidence" value="ECO:0000314"/>
    <property type="project" value="UniProtKB"/>
</dbReference>
<dbReference type="GO" id="GO:0050084">
    <property type="term" value="F:mannitol-1-phosphatase activity"/>
    <property type="evidence" value="ECO:0000314"/>
    <property type="project" value="EcoCyc"/>
</dbReference>
<dbReference type="GO" id="GO:0046872">
    <property type="term" value="F:metal ion binding"/>
    <property type="evidence" value="ECO:0000314"/>
    <property type="project" value="EcoliWiki"/>
</dbReference>
<dbReference type="GO" id="GO:0016791">
    <property type="term" value="F:phosphatase activity"/>
    <property type="evidence" value="ECO:0000314"/>
    <property type="project" value="EcoliWiki"/>
</dbReference>
<dbReference type="GO" id="GO:0050286">
    <property type="term" value="F:sorbitol-6-phosphatase activity"/>
    <property type="evidence" value="ECO:0000314"/>
    <property type="project" value="EcoCyc"/>
</dbReference>
<dbReference type="GO" id="GO:0050308">
    <property type="term" value="F:sugar-phosphatase activity"/>
    <property type="evidence" value="ECO:0000314"/>
    <property type="project" value="EcoliWiki"/>
</dbReference>
<dbReference type="CDD" id="cd07505">
    <property type="entry name" value="HAD_BPGM-like"/>
    <property type="match status" value="1"/>
</dbReference>
<dbReference type="FunFam" id="1.10.150.240:FF:000004">
    <property type="entry name" value="2-deoxyglucose-6-phosphate phosphatase YniC"/>
    <property type="match status" value="1"/>
</dbReference>
<dbReference type="FunFam" id="3.40.50.1000:FF:000036">
    <property type="entry name" value="HAD family hydrolase"/>
    <property type="match status" value="1"/>
</dbReference>
<dbReference type="Gene3D" id="3.40.50.1000">
    <property type="entry name" value="HAD superfamily/HAD-like"/>
    <property type="match status" value="1"/>
</dbReference>
<dbReference type="Gene3D" id="1.10.150.240">
    <property type="entry name" value="Putative phosphatase, domain 2"/>
    <property type="match status" value="1"/>
</dbReference>
<dbReference type="InterPro" id="IPR051600">
    <property type="entry name" value="Beta-PGM-like"/>
</dbReference>
<dbReference type="InterPro" id="IPR036412">
    <property type="entry name" value="HAD-like_sf"/>
</dbReference>
<dbReference type="InterPro" id="IPR006439">
    <property type="entry name" value="HAD-SF_hydro_IA"/>
</dbReference>
<dbReference type="InterPro" id="IPR023214">
    <property type="entry name" value="HAD_sf"/>
</dbReference>
<dbReference type="InterPro" id="IPR023198">
    <property type="entry name" value="PGP-like_dom2"/>
</dbReference>
<dbReference type="NCBIfam" id="TIGR01509">
    <property type="entry name" value="HAD-SF-IA-v3"/>
    <property type="match status" value="1"/>
</dbReference>
<dbReference type="NCBIfam" id="NF008087">
    <property type="entry name" value="PRK10826.1"/>
    <property type="match status" value="1"/>
</dbReference>
<dbReference type="PANTHER" id="PTHR46193">
    <property type="entry name" value="6-PHOSPHOGLUCONATE PHOSPHATASE"/>
    <property type="match status" value="1"/>
</dbReference>
<dbReference type="PANTHER" id="PTHR46193:SF18">
    <property type="entry name" value="HEXITOL PHOSPHATASE B"/>
    <property type="match status" value="1"/>
</dbReference>
<dbReference type="Pfam" id="PF00702">
    <property type="entry name" value="Hydrolase"/>
    <property type="match status" value="1"/>
</dbReference>
<dbReference type="PRINTS" id="PR00413">
    <property type="entry name" value="HADHALOGNASE"/>
</dbReference>
<dbReference type="SFLD" id="SFLDG01135">
    <property type="entry name" value="C1.5.6:_HAD__Beta-PGM__Phospha"/>
    <property type="match status" value="1"/>
</dbReference>
<dbReference type="SFLD" id="SFLDS00003">
    <property type="entry name" value="Haloacid_Dehalogenase"/>
    <property type="match status" value="1"/>
</dbReference>
<dbReference type="SUPFAM" id="SSF56784">
    <property type="entry name" value="HAD-like"/>
    <property type="match status" value="1"/>
</dbReference>
<proteinExistence type="evidence at protein level"/>
<keyword id="KW-0002">3D-structure</keyword>
<keyword id="KW-0119">Carbohydrate metabolism</keyword>
<keyword id="KW-0170">Cobalt</keyword>
<keyword id="KW-0378">Hydrolase</keyword>
<keyword id="KW-0460">Magnesium</keyword>
<keyword id="KW-0464">Manganese</keyword>
<keyword id="KW-0479">Metal-binding</keyword>
<keyword id="KW-1185">Reference proteome</keyword>
<keyword id="KW-0862">Zinc</keyword>
<protein>
    <recommendedName>
        <fullName evidence="6">Hexitol phosphatase B</fullName>
    </recommendedName>
    <alternativeName>
        <fullName evidence="8">2-deoxyglucose-6-phosphate phosphatase</fullName>
        <ecNumber evidence="3">3.1.3.68</ecNumber>
    </alternativeName>
    <alternativeName>
        <fullName evidence="9">Mannitol-1-phosphatase</fullName>
        <ecNumber evidence="4">3.1.3.22</ecNumber>
    </alternativeName>
    <alternativeName>
        <fullName evidence="9">Sorbitol-6-phosphatase</fullName>
        <ecNumber evidence="4">3.1.3.50</ecNumber>
    </alternativeName>
    <alternativeName>
        <fullName evidence="8">Sugar-phosphatase</fullName>
        <ecNumber evidence="3">3.1.3.23</ecNumber>
    </alternativeName>
</protein>